<reference key="1">
    <citation type="journal article" date="2007" name="Science">
        <title>Legumes symbioses: absence of nod genes in photosynthetic bradyrhizobia.</title>
        <authorList>
            <person name="Giraud E."/>
            <person name="Moulin L."/>
            <person name="Vallenet D."/>
            <person name="Barbe V."/>
            <person name="Cytryn E."/>
            <person name="Avarre J.-C."/>
            <person name="Jaubert M."/>
            <person name="Simon D."/>
            <person name="Cartieaux F."/>
            <person name="Prin Y."/>
            <person name="Bena G."/>
            <person name="Hannibal L."/>
            <person name="Fardoux J."/>
            <person name="Kojadinovic M."/>
            <person name="Vuillet L."/>
            <person name="Lajus A."/>
            <person name="Cruveiller S."/>
            <person name="Rouy Z."/>
            <person name="Mangenot S."/>
            <person name="Segurens B."/>
            <person name="Dossat C."/>
            <person name="Franck W.L."/>
            <person name="Chang W.-S."/>
            <person name="Saunders E."/>
            <person name="Bruce D."/>
            <person name="Richardson P."/>
            <person name="Normand P."/>
            <person name="Dreyfus B."/>
            <person name="Pignol D."/>
            <person name="Stacey G."/>
            <person name="Emerich D."/>
            <person name="Vermeglio A."/>
            <person name="Medigue C."/>
            <person name="Sadowsky M."/>
        </authorList>
    </citation>
    <scope>NUCLEOTIDE SEQUENCE [LARGE SCALE GENOMIC DNA]</scope>
    <source>
        <strain>ORS 278</strain>
    </source>
</reference>
<protein>
    <recommendedName>
        <fullName evidence="1">DNA ligase</fullName>
        <ecNumber evidence="1">6.5.1.2</ecNumber>
    </recommendedName>
    <alternativeName>
        <fullName evidence="1">Polydeoxyribonucleotide synthase [NAD(+)]</fullName>
    </alternativeName>
</protein>
<dbReference type="EC" id="6.5.1.2" evidence="1"/>
<dbReference type="EMBL" id="CU234118">
    <property type="protein sequence ID" value="CAL79319.1"/>
    <property type="molecule type" value="Genomic_DNA"/>
</dbReference>
<dbReference type="RefSeq" id="WP_012029226.1">
    <property type="nucleotide sequence ID" value="NC_009445.1"/>
</dbReference>
<dbReference type="SMR" id="A4YZJ3"/>
<dbReference type="STRING" id="114615.BRADO5649"/>
<dbReference type="KEGG" id="bra:BRADO5649"/>
<dbReference type="eggNOG" id="COG0272">
    <property type="taxonomic scope" value="Bacteria"/>
</dbReference>
<dbReference type="HOGENOM" id="CLU_007764_2_1_5"/>
<dbReference type="OrthoDB" id="9759736at2"/>
<dbReference type="Proteomes" id="UP000001994">
    <property type="component" value="Chromosome"/>
</dbReference>
<dbReference type="GO" id="GO:0005829">
    <property type="term" value="C:cytosol"/>
    <property type="evidence" value="ECO:0007669"/>
    <property type="project" value="TreeGrafter"/>
</dbReference>
<dbReference type="GO" id="GO:0003911">
    <property type="term" value="F:DNA ligase (NAD+) activity"/>
    <property type="evidence" value="ECO:0007669"/>
    <property type="project" value="UniProtKB-UniRule"/>
</dbReference>
<dbReference type="GO" id="GO:0046872">
    <property type="term" value="F:metal ion binding"/>
    <property type="evidence" value="ECO:0007669"/>
    <property type="project" value="UniProtKB-KW"/>
</dbReference>
<dbReference type="GO" id="GO:0006281">
    <property type="term" value="P:DNA repair"/>
    <property type="evidence" value="ECO:0007669"/>
    <property type="project" value="UniProtKB-KW"/>
</dbReference>
<dbReference type="GO" id="GO:0006260">
    <property type="term" value="P:DNA replication"/>
    <property type="evidence" value="ECO:0007669"/>
    <property type="project" value="UniProtKB-KW"/>
</dbReference>
<dbReference type="CDD" id="cd17748">
    <property type="entry name" value="BRCT_DNA_ligase_like"/>
    <property type="match status" value="1"/>
</dbReference>
<dbReference type="CDD" id="cd00114">
    <property type="entry name" value="LIGANc"/>
    <property type="match status" value="1"/>
</dbReference>
<dbReference type="FunFam" id="1.10.150.20:FF:000007">
    <property type="entry name" value="DNA ligase"/>
    <property type="match status" value="1"/>
</dbReference>
<dbReference type="FunFam" id="2.40.50.140:FF:000490">
    <property type="entry name" value="DNA ligase"/>
    <property type="match status" value="1"/>
</dbReference>
<dbReference type="FunFam" id="3.30.470.30:FF:000001">
    <property type="entry name" value="DNA ligase"/>
    <property type="match status" value="1"/>
</dbReference>
<dbReference type="Gene3D" id="1.10.150.20">
    <property type="entry name" value="5' to 3' exonuclease, C-terminal subdomain"/>
    <property type="match status" value="2"/>
</dbReference>
<dbReference type="Gene3D" id="3.40.50.10190">
    <property type="entry name" value="BRCT domain"/>
    <property type="match status" value="1"/>
</dbReference>
<dbReference type="Gene3D" id="3.30.470.30">
    <property type="entry name" value="DNA ligase/mRNA capping enzyme"/>
    <property type="match status" value="1"/>
</dbReference>
<dbReference type="Gene3D" id="1.10.287.610">
    <property type="entry name" value="Helix hairpin bin"/>
    <property type="match status" value="1"/>
</dbReference>
<dbReference type="Gene3D" id="2.40.50.140">
    <property type="entry name" value="Nucleic acid-binding proteins"/>
    <property type="match status" value="1"/>
</dbReference>
<dbReference type="HAMAP" id="MF_01588">
    <property type="entry name" value="DNA_ligase_A"/>
    <property type="match status" value="1"/>
</dbReference>
<dbReference type="InterPro" id="IPR001357">
    <property type="entry name" value="BRCT_dom"/>
</dbReference>
<dbReference type="InterPro" id="IPR036420">
    <property type="entry name" value="BRCT_dom_sf"/>
</dbReference>
<dbReference type="InterPro" id="IPR041663">
    <property type="entry name" value="DisA/LigA_HHH"/>
</dbReference>
<dbReference type="InterPro" id="IPR001679">
    <property type="entry name" value="DNA_ligase"/>
</dbReference>
<dbReference type="InterPro" id="IPR018239">
    <property type="entry name" value="DNA_ligase_AS"/>
</dbReference>
<dbReference type="InterPro" id="IPR013839">
    <property type="entry name" value="DNAligase_adenylation"/>
</dbReference>
<dbReference type="InterPro" id="IPR013840">
    <property type="entry name" value="DNAligase_N"/>
</dbReference>
<dbReference type="InterPro" id="IPR012340">
    <property type="entry name" value="NA-bd_OB-fold"/>
</dbReference>
<dbReference type="InterPro" id="IPR004150">
    <property type="entry name" value="NAD_DNA_ligase_OB"/>
</dbReference>
<dbReference type="InterPro" id="IPR010994">
    <property type="entry name" value="RuvA_2-like"/>
</dbReference>
<dbReference type="NCBIfam" id="TIGR00575">
    <property type="entry name" value="dnlj"/>
    <property type="match status" value="1"/>
</dbReference>
<dbReference type="NCBIfam" id="NF005932">
    <property type="entry name" value="PRK07956.1"/>
    <property type="match status" value="1"/>
</dbReference>
<dbReference type="PANTHER" id="PTHR23389">
    <property type="entry name" value="CHROMOSOME TRANSMISSION FIDELITY FACTOR 18"/>
    <property type="match status" value="1"/>
</dbReference>
<dbReference type="PANTHER" id="PTHR23389:SF9">
    <property type="entry name" value="DNA LIGASE"/>
    <property type="match status" value="1"/>
</dbReference>
<dbReference type="Pfam" id="PF00533">
    <property type="entry name" value="BRCT"/>
    <property type="match status" value="1"/>
</dbReference>
<dbReference type="Pfam" id="PF01653">
    <property type="entry name" value="DNA_ligase_aden"/>
    <property type="match status" value="1"/>
</dbReference>
<dbReference type="Pfam" id="PF03120">
    <property type="entry name" value="DNA_ligase_OB"/>
    <property type="match status" value="1"/>
</dbReference>
<dbReference type="Pfam" id="PF12826">
    <property type="entry name" value="HHH_2"/>
    <property type="match status" value="1"/>
</dbReference>
<dbReference type="PIRSF" id="PIRSF001604">
    <property type="entry name" value="LigA"/>
    <property type="match status" value="1"/>
</dbReference>
<dbReference type="SMART" id="SM00292">
    <property type="entry name" value="BRCT"/>
    <property type="match status" value="1"/>
</dbReference>
<dbReference type="SMART" id="SM00532">
    <property type="entry name" value="LIGANc"/>
    <property type="match status" value="1"/>
</dbReference>
<dbReference type="SUPFAM" id="SSF52113">
    <property type="entry name" value="BRCT domain"/>
    <property type="match status" value="1"/>
</dbReference>
<dbReference type="SUPFAM" id="SSF56091">
    <property type="entry name" value="DNA ligase/mRNA capping enzyme, catalytic domain"/>
    <property type="match status" value="1"/>
</dbReference>
<dbReference type="SUPFAM" id="SSF50249">
    <property type="entry name" value="Nucleic acid-binding proteins"/>
    <property type="match status" value="1"/>
</dbReference>
<dbReference type="SUPFAM" id="SSF47781">
    <property type="entry name" value="RuvA domain 2-like"/>
    <property type="match status" value="1"/>
</dbReference>
<dbReference type="PROSITE" id="PS50172">
    <property type="entry name" value="BRCT"/>
    <property type="match status" value="1"/>
</dbReference>
<dbReference type="PROSITE" id="PS01055">
    <property type="entry name" value="DNA_LIGASE_N1"/>
    <property type="match status" value="1"/>
</dbReference>
<sequence length="716" mass="79735">MAKTAKSKQSVDVADLTKAQAKVEWKRLALELETHDRLYYQEDAPKISDAAYDELRRRFNAIEKRFPELVSRDSPSQTVGAAPSGRFKKVRHAVPMLSLDNAFAEEDVRDFVGRIARFLKLAEDDRIAFSAEPKIDGLSMSLRYEGGQLVTAATRGDGAEGEDVTANIRTLKDVPQKLHGRNLPDICEIRGEVYMTKQAFLALNERQKEAGDTIFANPRNSAAGSLRQKDPTITASRPLGFFAYAWGDMSAMPAETQSGMIKWFEHCGFTTNPLTKLCHSVEELIAFHRAIEEQRAELDYDIDGVVYKVDRIDWQERLGFVSRTPRWGIAHKFPAERAMTVLKDIEIQVGRTGSFTPVGKLEPVGVGGVIVQNVTLHNEDYIKGIGNKGEVLREGRDIRIGDTVVIQRAGDVIPQVVDVLIDKRPADAEVFAFPRKCPCPLHTDVVREETAAGEEGSRARCTGEFACPYQKIEHLKLFASRRAFDIDGLGEKQIQFFFDEGWVKEPADIFTLQKRNAKLKLEEVEGYGETSVRNLFNAIEARREMALERFIYALGMRYVGETTALALARGYGSWEAFHDACLKVANGDEEAIAEMDALDQIGETVIKSVAAYFGEDHNRGIVERLTREVKILDAEKPKRNSPIATKTVVFTGTLEKMTRDEAKATAERLGAKVSGSVSKKTDYVVAGPGAGSKLKDAEKHGVKVLTEDEWLQLIGE</sequence>
<evidence type="ECO:0000255" key="1">
    <source>
        <dbReference type="HAMAP-Rule" id="MF_01588"/>
    </source>
</evidence>
<accession>A4YZJ3</accession>
<keyword id="KW-0227">DNA damage</keyword>
<keyword id="KW-0234">DNA repair</keyword>
<keyword id="KW-0235">DNA replication</keyword>
<keyword id="KW-0436">Ligase</keyword>
<keyword id="KW-0460">Magnesium</keyword>
<keyword id="KW-0464">Manganese</keyword>
<keyword id="KW-0479">Metal-binding</keyword>
<keyword id="KW-0520">NAD</keyword>
<keyword id="KW-1185">Reference proteome</keyword>
<keyword id="KW-0862">Zinc</keyword>
<gene>
    <name evidence="1" type="primary">ligA</name>
    <name type="ordered locus">BRADO5649</name>
</gene>
<feature type="chain" id="PRO_0000313151" description="DNA ligase">
    <location>
        <begin position="1"/>
        <end position="716"/>
    </location>
</feature>
<feature type="domain" description="BRCT" evidence="1">
    <location>
        <begin position="638"/>
        <end position="716"/>
    </location>
</feature>
<feature type="active site" description="N6-AMP-lysine intermediate" evidence="1">
    <location>
        <position position="134"/>
    </location>
</feature>
<feature type="binding site" evidence="1">
    <location>
        <begin position="49"/>
        <end position="53"/>
    </location>
    <ligand>
        <name>NAD(+)</name>
        <dbReference type="ChEBI" id="CHEBI:57540"/>
    </ligand>
</feature>
<feature type="binding site" evidence="1">
    <location>
        <begin position="98"/>
        <end position="99"/>
    </location>
    <ligand>
        <name>NAD(+)</name>
        <dbReference type="ChEBI" id="CHEBI:57540"/>
    </ligand>
</feature>
<feature type="binding site" evidence="1">
    <location>
        <position position="132"/>
    </location>
    <ligand>
        <name>NAD(+)</name>
        <dbReference type="ChEBI" id="CHEBI:57540"/>
    </ligand>
</feature>
<feature type="binding site" evidence="1">
    <location>
        <position position="155"/>
    </location>
    <ligand>
        <name>NAD(+)</name>
        <dbReference type="ChEBI" id="CHEBI:57540"/>
    </ligand>
</feature>
<feature type="binding site" evidence="1">
    <location>
        <position position="192"/>
    </location>
    <ligand>
        <name>NAD(+)</name>
        <dbReference type="ChEBI" id="CHEBI:57540"/>
    </ligand>
</feature>
<feature type="binding site" evidence="1">
    <location>
        <position position="308"/>
    </location>
    <ligand>
        <name>NAD(+)</name>
        <dbReference type="ChEBI" id="CHEBI:57540"/>
    </ligand>
</feature>
<feature type="binding site" evidence="1">
    <location>
        <position position="332"/>
    </location>
    <ligand>
        <name>NAD(+)</name>
        <dbReference type="ChEBI" id="CHEBI:57540"/>
    </ligand>
</feature>
<feature type="binding site" evidence="1">
    <location>
        <position position="437"/>
    </location>
    <ligand>
        <name>Zn(2+)</name>
        <dbReference type="ChEBI" id="CHEBI:29105"/>
    </ligand>
</feature>
<feature type="binding site" evidence="1">
    <location>
        <position position="439"/>
    </location>
    <ligand>
        <name>Zn(2+)</name>
        <dbReference type="ChEBI" id="CHEBI:29105"/>
    </ligand>
</feature>
<feature type="binding site" evidence="1">
    <location>
        <position position="461"/>
    </location>
    <ligand>
        <name>Zn(2+)</name>
        <dbReference type="ChEBI" id="CHEBI:29105"/>
    </ligand>
</feature>
<feature type="binding site" evidence="1">
    <location>
        <position position="467"/>
    </location>
    <ligand>
        <name>Zn(2+)</name>
        <dbReference type="ChEBI" id="CHEBI:29105"/>
    </ligand>
</feature>
<name>DNLJ_BRASO</name>
<proteinExistence type="inferred from homology"/>
<organism>
    <name type="scientific">Bradyrhizobium sp. (strain ORS 278)</name>
    <dbReference type="NCBI Taxonomy" id="114615"/>
    <lineage>
        <taxon>Bacteria</taxon>
        <taxon>Pseudomonadati</taxon>
        <taxon>Pseudomonadota</taxon>
        <taxon>Alphaproteobacteria</taxon>
        <taxon>Hyphomicrobiales</taxon>
        <taxon>Nitrobacteraceae</taxon>
        <taxon>Bradyrhizobium</taxon>
    </lineage>
</organism>
<comment type="function">
    <text evidence="1">DNA ligase that catalyzes the formation of phosphodiester linkages between 5'-phosphoryl and 3'-hydroxyl groups in double-stranded DNA using NAD as a coenzyme and as the energy source for the reaction. It is essential for DNA replication and repair of damaged DNA.</text>
</comment>
<comment type="catalytic activity">
    <reaction evidence="1">
        <text>NAD(+) + (deoxyribonucleotide)n-3'-hydroxyl + 5'-phospho-(deoxyribonucleotide)m = (deoxyribonucleotide)n+m + AMP + beta-nicotinamide D-nucleotide.</text>
        <dbReference type="EC" id="6.5.1.2"/>
    </reaction>
</comment>
<comment type="cofactor">
    <cofactor evidence="1">
        <name>Mg(2+)</name>
        <dbReference type="ChEBI" id="CHEBI:18420"/>
    </cofactor>
    <cofactor evidence="1">
        <name>Mn(2+)</name>
        <dbReference type="ChEBI" id="CHEBI:29035"/>
    </cofactor>
</comment>
<comment type="similarity">
    <text evidence="1">Belongs to the NAD-dependent DNA ligase family. LigA subfamily.</text>
</comment>